<name>UTP25_RAT</name>
<sequence length="763" mass="87825">MGKRRSRGRSQLLSTMTKKQKKHLRDFGEEHPFYDRVSKKEVKPQICQLSESSDSSHSESESESEQEHVSGYHRLLATLKNISEEEEEEEEEEEEEEEDKEEVDDSAVGDSEMNGEDGGEDVRVEETAESSETQDHMSLADNSKGKDGEEPPGVSQKSSEEFTDVKHESLFSLETNFLEEESGGSYSQRTSQDPFQHHINKELQEKEIQAAASSPAATQQLKWPVLGHLVFSSKFQKMETFKPPKDIDLKSLHLQKPLESTWAKTNSQFLSGPGPQKSSSCFTPLQKELFLIMNSYRDLFYPERTALKNGEEVRHVYCLHAINHVLKANAQVLANNSRRRTQKLGVGDDDDFRDQGLTRPKVLIVVPFREAALRVVQLFISLLEGDSKKKIIVSNKKRFQGEYGSDPEERPPNLKRPEDYEAVFVGNIDDHFRIGVAILQRSIRLYAPFYSSDILIASPLGLRTIIGGEGEKKRDFDFLSSIELLIIDQADIYLMQNWEHVLHLMNHMNLLPLDSHGVNFSRVRMWSLNNWSKYYRQTLLFGALQDAQINSVFNKHCVNAQGQVAVRNVPMTGSISHVLVQLPHVFQRMEAQDLASVIDARFHFFINKILPQYRDAVMSHTLIYVPSYFDFVRLRNYFKKEELNFTHICEYTQRSGVSRARHFFLQGEKQFLLLTERFHFYKRYTIKGIRNLIFYELPTYAHFYSEVCNMLRATSRGEEATWTCTVLYSKYDAQRLAAVVGVERAAQMLQSPKSVHLFITGEK</sequence>
<proteinExistence type="evidence at transcript level"/>
<evidence type="ECO:0000250" key="1">
    <source>
        <dbReference type="UniProtKB" id="Q68CQ4"/>
    </source>
</evidence>
<evidence type="ECO:0000250" key="2">
    <source>
        <dbReference type="UniProtKB" id="Q6PEH4"/>
    </source>
</evidence>
<evidence type="ECO:0000256" key="3">
    <source>
        <dbReference type="SAM" id="MobiDB-lite"/>
    </source>
</evidence>
<evidence type="ECO:0000305" key="4"/>
<evidence type="ECO:0000312" key="5">
    <source>
        <dbReference type="RGD" id="1359148"/>
    </source>
</evidence>
<reference key="1">
    <citation type="journal article" date="2004" name="Genome Res.">
        <title>The status, quality, and expansion of the NIH full-length cDNA project: the Mammalian Gene Collection (MGC).</title>
        <authorList>
            <consortium name="The MGC Project Team"/>
        </authorList>
    </citation>
    <scope>NUCLEOTIDE SEQUENCE [LARGE SCALE MRNA]</scope>
    <source>
        <tissue>Heart</tissue>
    </source>
</reference>
<feature type="chain" id="PRO_0000254151" description="U3 small nucleolar RNA-associated protein 25 homolog">
    <location>
        <begin position="1"/>
        <end position="763"/>
    </location>
</feature>
<feature type="region of interest" description="Promotes p53/TP53 degradation" evidence="2">
    <location>
        <begin position="1"/>
        <end position="190"/>
    </location>
</feature>
<feature type="region of interest" description="Disordered" evidence="3">
    <location>
        <begin position="1"/>
        <end position="164"/>
    </location>
</feature>
<feature type="region of interest" description="Promotes p53/TP53 degradation" evidence="2">
    <location>
        <begin position="580"/>
        <end position="642"/>
    </location>
</feature>
<feature type="region of interest" description="Represses p53/TP53 degradation" evidence="2">
    <location>
        <begin position="643"/>
        <end position="704"/>
    </location>
</feature>
<feature type="compositionally biased region" description="Basic and acidic residues" evidence="3">
    <location>
        <begin position="25"/>
        <end position="43"/>
    </location>
</feature>
<feature type="compositionally biased region" description="Basic and acidic residues" evidence="3">
    <location>
        <begin position="54"/>
        <end position="70"/>
    </location>
</feature>
<feature type="compositionally biased region" description="Acidic residues" evidence="3">
    <location>
        <begin position="84"/>
        <end position="119"/>
    </location>
</feature>
<feature type="modified residue" description="Phosphoserine" evidence="1">
    <location>
        <position position="10"/>
    </location>
</feature>
<feature type="modified residue" description="Phosphoserine" evidence="2">
    <location>
        <position position="52"/>
    </location>
</feature>
<feature type="modified residue" description="Phosphoserine" evidence="2">
    <location>
        <position position="60"/>
    </location>
</feature>
<feature type="modified residue" description="Phosphoserine" evidence="2">
    <location>
        <position position="64"/>
    </location>
</feature>
<gene>
    <name evidence="5" type="primary">Utp25</name>
    <name type="synonym">Def</name>
    <name type="synonym">Diexf</name>
</gene>
<dbReference type="EMBL" id="BC087114">
    <property type="protein sequence ID" value="AAH87114.1"/>
    <property type="molecule type" value="mRNA"/>
</dbReference>
<dbReference type="RefSeq" id="NP_001014008.1">
    <property type="nucleotide sequence ID" value="NM_001013986.2"/>
</dbReference>
<dbReference type="FunCoup" id="Q5M9G7">
    <property type="interactions" value="4506"/>
</dbReference>
<dbReference type="STRING" id="10116.ENSRNOP00000006395"/>
<dbReference type="PhosphoSitePlus" id="Q5M9G7"/>
<dbReference type="PaxDb" id="10116-ENSRNOP00000006395"/>
<dbReference type="Ensembl" id="ENSRNOT00000006395.7">
    <property type="protein sequence ID" value="ENSRNOP00000006395.4"/>
    <property type="gene ID" value="ENSRNOG00000004789.8"/>
</dbReference>
<dbReference type="GeneID" id="305076"/>
<dbReference type="KEGG" id="rno:305076"/>
<dbReference type="AGR" id="RGD:1359148"/>
<dbReference type="CTD" id="27042"/>
<dbReference type="RGD" id="1359148">
    <property type="gene designation" value="Utp25"/>
</dbReference>
<dbReference type="eggNOG" id="KOG2340">
    <property type="taxonomic scope" value="Eukaryota"/>
</dbReference>
<dbReference type="GeneTree" id="ENSGT00390000000709"/>
<dbReference type="HOGENOM" id="CLU_018705_1_1_1"/>
<dbReference type="InParanoid" id="Q5M9G7"/>
<dbReference type="OMA" id="QDRGDTF"/>
<dbReference type="OrthoDB" id="10264378at2759"/>
<dbReference type="Reactome" id="R-RNO-6791226">
    <property type="pathway name" value="Major pathway of rRNA processing in the nucleolus and cytosol"/>
</dbReference>
<dbReference type="PRO" id="PR:Q5M9G7"/>
<dbReference type="Proteomes" id="UP000002494">
    <property type="component" value="Chromosome 13"/>
</dbReference>
<dbReference type="Bgee" id="ENSRNOG00000004789">
    <property type="expression patterns" value="Expressed in spleen and 19 other cell types or tissues"/>
</dbReference>
<dbReference type="GO" id="GO:0005730">
    <property type="term" value="C:nucleolus"/>
    <property type="evidence" value="ECO:0000250"/>
    <property type="project" value="UniProtKB"/>
</dbReference>
<dbReference type="GO" id="GO:0032040">
    <property type="term" value="C:small-subunit processome"/>
    <property type="evidence" value="ECO:0000318"/>
    <property type="project" value="GO_Central"/>
</dbReference>
<dbReference type="GO" id="GO:0019843">
    <property type="term" value="F:rRNA binding"/>
    <property type="evidence" value="ECO:0000318"/>
    <property type="project" value="GO_Central"/>
</dbReference>
<dbReference type="GO" id="GO:0034511">
    <property type="term" value="F:U3 snoRNA binding"/>
    <property type="evidence" value="ECO:0000318"/>
    <property type="project" value="GO_Central"/>
</dbReference>
<dbReference type="GO" id="GO:0048568">
    <property type="term" value="P:embryonic organ development"/>
    <property type="evidence" value="ECO:0000250"/>
    <property type="project" value="UniProtKB"/>
</dbReference>
<dbReference type="GO" id="GO:0000462">
    <property type="term" value="P:maturation of SSU-rRNA from tricistronic rRNA transcript (SSU-rRNA, 5.8S rRNA, LSU-rRNA)"/>
    <property type="evidence" value="ECO:0000318"/>
    <property type="project" value="GO_Central"/>
</dbReference>
<dbReference type="GO" id="GO:0040019">
    <property type="term" value="P:positive regulation of embryonic development"/>
    <property type="evidence" value="ECO:0000250"/>
    <property type="project" value="UniProtKB"/>
</dbReference>
<dbReference type="GO" id="GO:0030163">
    <property type="term" value="P:protein catabolic process"/>
    <property type="evidence" value="ECO:0000250"/>
    <property type="project" value="UniProtKB"/>
</dbReference>
<dbReference type="GO" id="GO:0031648">
    <property type="term" value="P:protein destabilization"/>
    <property type="evidence" value="ECO:0000250"/>
    <property type="project" value="UniProtKB"/>
</dbReference>
<dbReference type="GO" id="GO:1902570">
    <property type="term" value="P:protein localization to nucleolus"/>
    <property type="evidence" value="ECO:0000250"/>
    <property type="project" value="UniProtKB"/>
</dbReference>
<dbReference type="FunFam" id="3.40.50.300:FF:000962">
    <property type="entry name" value="digestive organ expansion factor homolog"/>
    <property type="match status" value="1"/>
</dbReference>
<dbReference type="Gene3D" id="3.40.50.300">
    <property type="entry name" value="P-loop containing nucleotide triphosphate hydrolases"/>
    <property type="match status" value="1"/>
</dbReference>
<dbReference type="InterPro" id="IPR027417">
    <property type="entry name" value="P-loop_NTPase"/>
</dbReference>
<dbReference type="InterPro" id="IPR010678">
    <property type="entry name" value="UTP25"/>
</dbReference>
<dbReference type="InterPro" id="IPR053939">
    <property type="entry name" value="UTP25_C"/>
</dbReference>
<dbReference type="InterPro" id="IPR053940">
    <property type="entry name" value="UTP25_NTPase-like"/>
</dbReference>
<dbReference type="PANTHER" id="PTHR12933">
    <property type="entry name" value="ORF PROTEIN-RELATED"/>
    <property type="match status" value="1"/>
</dbReference>
<dbReference type="PANTHER" id="PTHR12933:SF0">
    <property type="entry name" value="U3 SMALL NUCLEOLAR RNA-ASSOCIATED PROTEIN 25 HOMOLOG"/>
    <property type="match status" value="1"/>
</dbReference>
<dbReference type="Pfam" id="PF06862">
    <property type="entry name" value="Utp25_C"/>
    <property type="match status" value="1"/>
</dbReference>
<dbReference type="Pfam" id="PF22916">
    <property type="entry name" value="UTP25_NTPase-like"/>
    <property type="match status" value="1"/>
</dbReference>
<dbReference type="SUPFAM" id="SSF52540">
    <property type="entry name" value="P-loop containing nucleoside triphosphate hydrolases"/>
    <property type="match status" value="1"/>
</dbReference>
<comment type="function">
    <text evidence="1 2">Component of the ribosomal small subunit processome for the biogenesis of ribosomes, functions in pre-ribosomal RNA (pre-rRNA) processing (By similarity). Essential for embryonic development in part through the regulation of p53 pathway. Controls the expansion growth of digestive organs and liver (By similarity). Also involved in the sympathetic neuronal development (By similarity). Mediates, with CAPN3, the proteasome-independent degradation of p53/TP53 (By similarity).</text>
</comment>
<comment type="subunit">
    <text evidence="1">Interacts with CAPN3; the interaction is required for CAPN3 translocation to the nucleolus.</text>
</comment>
<comment type="subcellular location">
    <subcellularLocation>
        <location evidence="1">Nucleus</location>
        <location evidence="1">Nucleolus</location>
    </subcellularLocation>
</comment>
<comment type="PTM">
    <text evidence="1">Phosphorylated. Phosphorylation is required to promote p53/TP53 degradation in the nucleolus which promotes cell cycle progression and liver development.</text>
</comment>
<comment type="similarity">
    <text evidence="4">Belongs to the UTP25 family.</text>
</comment>
<keyword id="KW-0217">Developmental protein</keyword>
<keyword id="KW-0539">Nucleus</keyword>
<keyword id="KW-0597">Phosphoprotein</keyword>
<keyword id="KW-1185">Reference proteome</keyword>
<protein>
    <recommendedName>
        <fullName>U3 small nucleolar RNA-associated protein 25 homolog</fullName>
    </recommendedName>
    <alternativeName>
        <fullName>Digestive organ expansion factor homolog</fullName>
    </alternativeName>
    <alternativeName>
        <fullName>UTP25 small subunit processor component</fullName>
    </alternativeName>
</protein>
<organism>
    <name type="scientific">Rattus norvegicus</name>
    <name type="common">Rat</name>
    <dbReference type="NCBI Taxonomy" id="10116"/>
    <lineage>
        <taxon>Eukaryota</taxon>
        <taxon>Metazoa</taxon>
        <taxon>Chordata</taxon>
        <taxon>Craniata</taxon>
        <taxon>Vertebrata</taxon>
        <taxon>Euteleostomi</taxon>
        <taxon>Mammalia</taxon>
        <taxon>Eutheria</taxon>
        <taxon>Euarchontoglires</taxon>
        <taxon>Glires</taxon>
        <taxon>Rodentia</taxon>
        <taxon>Myomorpha</taxon>
        <taxon>Muroidea</taxon>
        <taxon>Muridae</taxon>
        <taxon>Murinae</taxon>
        <taxon>Rattus</taxon>
    </lineage>
</organism>
<accession>Q5M9G7</accession>